<proteinExistence type="inferred from homology"/>
<name>APTH1_CRYNB</name>
<accession>P0CL95</accession>
<accession>Q55QW3</accession>
<accession>Q5KFA4</accession>
<sequence>MPTSLKHLKISPKEAHTATVIFLHGLGDSGHGWLPVAKMLWSSFPNVKWILPHAPTIPVSLNHGMAMPSWFDIRHLDKLDNSENDDEQGMLETLKSVDELIQAEVDSGIPENRIVLGGFSQGGAISVLNMLTTKRKLAGVVALSTWVPLNHKIVQMMSEHAKDIPVFWGHGTNDPVVDYRFGQRSVDFLVQKCGYKLLSQGTTFARPGIRFESYPGMPHSSCPQEIEDLKSWLMEALK</sequence>
<reference key="1">
    <citation type="journal article" date="2005" name="Science">
        <title>The genome of the basidiomycetous yeast and human pathogen Cryptococcus neoformans.</title>
        <authorList>
            <person name="Loftus B.J."/>
            <person name="Fung E."/>
            <person name="Roncaglia P."/>
            <person name="Rowley D."/>
            <person name="Amedeo P."/>
            <person name="Bruno D."/>
            <person name="Vamathevan J."/>
            <person name="Miranda M."/>
            <person name="Anderson I.J."/>
            <person name="Fraser J.A."/>
            <person name="Allen J.E."/>
            <person name="Bosdet I.E."/>
            <person name="Brent M.R."/>
            <person name="Chiu R."/>
            <person name="Doering T.L."/>
            <person name="Donlin M.J."/>
            <person name="D'Souza C.A."/>
            <person name="Fox D.S."/>
            <person name="Grinberg V."/>
            <person name="Fu J."/>
            <person name="Fukushima M."/>
            <person name="Haas B.J."/>
            <person name="Huang J.C."/>
            <person name="Janbon G."/>
            <person name="Jones S.J.M."/>
            <person name="Koo H.L."/>
            <person name="Krzywinski M.I."/>
            <person name="Kwon-Chung K.J."/>
            <person name="Lengeler K.B."/>
            <person name="Maiti R."/>
            <person name="Marra M.A."/>
            <person name="Marra R.E."/>
            <person name="Mathewson C.A."/>
            <person name="Mitchell T.G."/>
            <person name="Pertea M."/>
            <person name="Riggs F.R."/>
            <person name="Salzberg S.L."/>
            <person name="Schein J.E."/>
            <person name="Shvartsbeyn A."/>
            <person name="Shin H."/>
            <person name="Shumway M."/>
            <person name="Specht C.A."/>
            <person name="Suh B.B."/>
            <person name="Tenney A."/>
            <person name="Utterback T.R."/>
            <person name="Wickes B.L."/>
            <person name="Wortman J.R."/>
            <person name="Wye N.H."/>
            <person name="Kronstad J.W."/>
            <person name="Lodge J.K."/>
            <person name="Heitman J."/>
            <person name="Davis R.W."/>
            <person name="Fraser C.M."/>
            <person name="Hyman R.W."/>
        </authorList>
    </citation>
    <scope>NUCLEOTIDE SEQUENCE [LARGE SCALE GENOMIC DNA]</scope>
    <source>
        <strain>B-3501A</strain>
    </source>
</reference>
<protein>
    <recommendedName>
        <fullName>Acyl-protein thioesterase 1</fullName>
        <ecNumber evidence="2">3.1.2.-</ecNumber>
    </recommendedName>
    <alternativeName>
        <fullName>Palmitoyl-protein hydrolase</fullName>
        <ecNumber evidence="2">3.1.2.22</ecNumber>
    </alternativeName>
</protein>
<keyword id="KW-0963">Cytoplasm</keyword>
<keyword id="KW-0276">Fatty acid metabolism</keyword>
<keyword id="KW-0378">Hydrolase</keyword>
<keyword id="KW-0443">Lipid metabolism</keyword>
<keyword id="KW-0539">Nucleus</keyword>
<keyword id="KW-0719">Serine esterase</keyword>
<dbReference type="EC" id="3.1.2.-" evidence="2"/>
<dbReference type="EC" id="3.1.2.22" evidence="2"/>
<dbReference type="EMBL" id="AAEY01000031">
    <property type="protein sequence ID" value="EAL20149.1"/>
    <property type="molecule type" value="Genomic_DNA"/>
</dbReference>
<dbReference type="RefSeq" id="XP_774796.1">
    <property type="nucleotide sequence ID" value="XM_769703.1"/>
</dbReference>
<dbReference type="SMR" id="P0CL95"/>
<dbReference type="ESTHER" id="cryne-apth1">
    <property type="family name" value="LYsophospholipase_carboxylesterase"/>
</dbReference>
<dbReference type="EnsemblFungi" id="AAW44284">
    <property type="protein sequence ID" value="AAW44284"/>
    <property type="gene ID" value="CNF02430"/>
</dbReference>
<dbReference type="GeneID" id="4936778"/>
<dbReference type="KEGG" id="cnb:CNBF2260"/>
<dbReference type="VEuPathDB" id="FungiDB:CNBF2260"/>
<dbReference type="HOGENOM" id="CLU_049413_3_5_1"/>
<dbReference type="OrthoDB" id="5125at5206"/>
<dbReference type="GO" id="GO:0005737">
    <property type="term" value="C:cytoplasm"/>
    <property type="evidence" value="ECO:0007669"/>
    <property type="project" value="UniProtKB-SubCell"/>
</dbReference>
<dbReference type="GO" id="GO:0005634">
    <property type="term" value="C:nucleus"/>
    <property type="evidence" value="ECO:0007669"/>
    <property type="project" value="UniProtKB-SubCell"/>
</dbReference>
<dbReference type="GO" id="GO:0052689">
    <property type="term" value="F:carboxylic ester hydrolase activity"/>
    <property type="evidence" value="ECO:0007669"/>
    <property type="project" value="UniProtKB-KW"/>
</dbReference>
<dbReference type="GO" id="GO:0008474">
    <property type="term" value="F:palmitoyl-(protein) hydrolase activity"/>
    <property type="evidence" value="ECO:0007669"/>
    <property type="project" value="TreeGrafter"/>
</dbReference>
<dbReference type="GO" id="GO:0006631">
    <property type="term" value="P:fatty acid metabolic process"/>
    <property type="evidence" value="ECO:0007669"/>
    <property type="project" value="UniProtKB-KW"/>
</dbReference>
<dbReference type="FunFam" id="3.40.50.1820:FF:000010">
    <property type="entry name" value="Acyl-protein thioesterase 2"/>
    <property type="match status" value="1"/>
</dbReference>
<dbReference type="Gene3D" id="3.40.50.1820">
    <property type="entry name" value="alpha/beta hydrolase"/>
    <property type="match status" value="1"/>
</dbReference>
<dbReference type="InterPro" id="IPR029058">
    <property type="entry name" value="AB_hydrolase_fold"/>
</dbReference>
<dbReference type="InterPro" id="IPR050565">
    <property type="entry name" value="LYPA1-2/EST-like"/>
</dbReference>
<dbReference type="InterPro" id="IPR003140">
    <property type="entry name" value="PLipase/COase/thioEstase"/>
</dbReference>
<dbReference type="PANTHER" id="PTHR10655:SF17">
    <property type="entry name" value="LYSOPHOSPHOLIPASE-LIKE PROTEIN 1"/>
    <property type="match status" value="1"/>
</dbReference>
<dbReference type="PANTHER" id="PTHR10655">
    <property type="entry name" value="LYSOPHOSPHOLIPASE-RELATED"/>
    <property type="match status" value="1"/>
</dbReference>
<dbReference type="Pfam" id="PF02230">
    <property type="entry name" value="Abhydrolase_2"/>
    <property type="match status" value="1"/>
</dbReference>
<dbReference type="SUPFAM" id="SSF53474">
    <property type="entry name" value="alpha/beta-Hydrolases"/>
    <property type="match status" value="1"/>
</dbReference>
<organism>
    <name type="scientific">Cryptococcus neoformans var. neoformans serotype D (strain B-3501A)</name>
    <name type="common">Filobasidiella neoformans</name>
    <dbReference type="NCBI Taxonomy" id="283643"/>
    <lineage>
        <taxon>Eukaryota</taxon>
        <taxon>Fungi</taxon>
        <taxon>Dikarya</taxon>
        <taxon>Basidiomycota</taxon>
        <taxon>Agaricomycotina</taxon>
        <taxon>Tremellomycetes</taxon>
        <taxon>Tremellales</taxon>
        <taxon>Cryptococcaceae</taxon>
        <taxon>Cryptococcus</taxon>
        <taxon>Cryptococcus neoformans species complex</taxon>
    </lineage>
</organism>
<comment type="function">
    <text evidence="2">Hydrolyzes fatty acids from S-acylated cysteine residues in proteins with a strong preference for palmitoylated G-alpha proteins over other acyl substrates. Mediates the deacylation of G-alpha proteins such as GPA1 in vivo, but has weak or no activity toward palmitoylated Ras proteins. Has weak lysophospholipase activity in vitro; however such activity may not exist in vivo.</text>
</comment>
<comment type="catalytic activity">
    <reaction evidence="2">
        <text>S-hexadecanoyl-L-cysteinyl-[protein] + H2O = L-cysteinyl-[protein] + hexadecanoate + H(+)</text>
        <dbReference type="Rhea" id="RHEA:19233"/>
        <dbReference type="Rhea" id="RHEA-COMP:10131"/>
        <dbReference type="Rhea" id="RHEA-COMP:11032"/>
        <dbReference type="ChEBI" id="CHEBI:7896"/>
        <dbReference type="ChEBI" id="CHEBI:15377"/>
        <dbReference type="ChEBI" id="CHEBI:15378"/>
        <dbReference type="ChEBI" id="CHEBI:29950"/>
        <dbReference type="ChEBI" id="CHEBI:74151"/>
        <dbReference type="EC" id="3.1.2.22"/>
    </reaction>
</comment>
<comment type="subcellular location">
    <subcellularLocation>
        <location evidence="2">Cytoplasm</location>
    </subcellularLocation>
    <subcellularLocation>
        <location evidence="2">Nucleus</location>
    </subcellularLocation>
</comment>
<comment type="similarity">
    <text evidence="3">Belongs to the AB hydrolase superfamily. AB hydrolase 2 family.</text>
</comment>
<evidence type="ECO:0000250" key="1"/>
<evidence type="ECO:0000250" key="2">
    <source>
        <dbReference type="UniProtKB" id="Q12354"/>
    </source>
</evidence>
<evidence type="ECO:0000305" key="3"/>
<gene>
    <name type="ordered locus">CNBF2260</name>
</gene>
<feature type="chain" id="PRO_0000409998" description="Acyl-protein thioesterase 1">
    <location>
        <begin position="1"/>
        <end position="238"/>
    </location>
</feature>
<feature type="active site" description="Charge relay system" evidence="1">
    <location>
        <position position="120"/>
    </location>
</feature>
<feature type="active site" description="Charge relay system" evidence="1">
    <location>
        <position position="174"/>
    </location>
</feature>
<feature type="active site" description="Charge relay system" evidence="1">
    <location>
        <position position="219"/>
    </location>
</feature>